<keyword id="KW-1003">Cell membrane</keyword>
<keyword id="KW-0966">Cell projection</keyword>
<keyword id="KW-0137">Centromere</keyword>
<keyword id="KW-0158">Chromosome</keyword>
<keyword id="KW-0963">Cytoplasm</keyword>
<keyword id="KW-0206">Cytoskeleton</keyword>
<keyword id="KW-0256">Endoplasmic reticulum</keyword>
<keyword id="KW-0325">Glycoprotein</keyword>
<keyword id="KW-0333">Golgi apparatus</keyword>
<keyword id="KW-0472">Membrane</keyword>
<keyword id="KW-0539">Nucleus</keyword>
<keyword id="KW-1185">Reference proteome</keyword>
<keyword id="KW-0677">Repeat</keyword>
<keyword id="KW-0964">Secreted</keyword>
<keyword id="KW-0732">Signal</keyword>
<keyword id="KW-0812">Transmembrane</keyword>
<keyword id="KW-1133">Transmembrane helix</keyword>
<gene>
    <name evidence="22" type="primary">Pkhd1</name>
</gene>
<accession>E9PZ36</accession>
<comment type="function">
    <text evidence="1 2 12 14 16">Promotes ciliogenesis in renal epithelial cells and therefore participates in the tubules formation and/or ensures the maintenance of the architecture of the lumen of the kidney (PubMed:18235088, PubMed:20875407). Has an impact on cellular symmetry by ensuring correct bipolar cell division through the regulation of centrosome duplication and mitotic spindle assembly and by maintaining oriented cell division (OCD) during tubular elongation through planar cell polarity (PCP) pathway (PubMed:19959710). During epithelial cell morphogenesis, it also regulates cell-cell and cell-matrix adhesion and participates in cell motility (By similarity). Promotes cell-cell contact through the positive regulation of PTK2 kinase activity leading to either positive regulation of epithelial cell proliferation through the HRAS/RAF1 pathways, or negative regulation of apoptosis through the PDK1/AKT1 pathway (PubMed:20875407). May act in collecting-duct and biliary differentiation (By similarity). May participate in the regulation of the cholangiocytes proliferation and the CCN2 production in an CXCL8-dependent manner (By similarity).</text>
</comment>
<comment type="subunit">
    <text evidence="8 12 15 18 19">Interacts with CAMLG (PubMed:16243292). Interacts with PKD2 (PubMed:18235088). Interacts (via CST) with ARF4; this interaction allows an efficient PKHD1 trafficking to the cilium (PubMed:24586199). Interacts (via CST) with RAB8A; this interaction controls trafficking through the endomembrane systeme and to the cilium (PubMed:20048263). Interacts (via CST) with TULP3; this interaction allows PKHD1 trafficking to the cilium (PubMed:28154160).</text>
</comment>
<comment type="interaction">
    <interactant intactId="EBI-11693075">
        <id>E9PZ36</id>
    </interactant>
    <interactant intactId="EBI-1748958">
        <id>P49069</id>
        <label>CAMLG</label>
    </interactant>
    <organismsDiffer>true</organismsDiffer>
    <experiments>4</experiments>
</comment>
<comment type="subcellular location">
    <subcellularLocation>
        <location evidence="2">Cell membrane</location>
        <topology evidence="3">Single-pass membrane protein</topology>
    </subcellularLocation>
    <subcellularLocation>
        <location evidence="2">Cytoplasm</location>
    </subcellularLocation>
    <subcellularLocation>
        <location evidence="11">Apical cell membrane</location>
    </subcellularLocation>
    <subcellularLocation>
        <location evidence="2">Cytoplasm</location>
        <location evidence="2">Cytoskeleton</location>
        <location evidence="2">Cilium basal body</location>
    </subcellularLocation>
    <subcellularLocation>
        <location evidence="10 11 15 17 19">Cell projection</location>
        <location evidence="10 11 15 17 19">Cilium</location>
    </subcellularLocation>
    <subcellularLocation>
        <location evidence="2">Cytoplasm</location>
        <location evidence="2">Cytoskeleton</location>
        <location evidence="2">Spindle</location>
    </subcellularLocation>
    <subcellularLocation>
        <location evidence="2">Chromosome</location>
        <location evidence="2">Centromere</location>
    </subcellularLocation>
    <subcellularLocation>
        <location evidence="9">Nucleus</location>
    </subcellularLocation>
    <subcellularLocation>
        <location evidence="17 20">Secreted</location>
        <location evidence="17 20">Extracellular exosome</location>
    </subcellularLocation>
    <subcellularLocation>
        <location evidence="17 20">Secreted</location>
    </subcellularLocation>
    <subcellularLocation>
        <location evidence="20">Endoplasmic reticulum</location>
    </subcellularLocation>
    <subcellularLocation>
        <location evidence="20">Golgi apparatus</location>
    </subcellularLocation>
    <text evidence="9 17 20">The intra-cellular C-terminal fragment (ICD) translocates to the nucleus and is not detected in primary cilia (PubMed:16956880, PubMed:28729032). The extracellular domain (PECD) traffics beyond the mid-Golgi and localizes on exosome like vesicles (ELVs) attached to the primary cilium (PubMed:22021705, PubMed:28729032). In the urine, the extracellular domain (PECD) exists as a highly abundant secreted form and a less abundant PECD form that is either tethered to or shed with the C-terminal fragment (PTM) in ELVs (PubMed:28729032). The majority of full length PKHD1 protein resides at the endoplasmic reticulum and cannot pass beyond the mid-Golgi apparatus and is not detected in primary cilia (PubMed:28729032).</text>
</comment>
<comment type="tissue specificity">
    <text evidence="11 20">Expressed in bile ducts and distal nephron segments but is absent from the proximal tubule (PubMed:18202188). Expressed in pancreas and kidney but also in the liver (PubMed:28729032). Expressed primarily in the distal tubule and thick ascending limb of the loop of Henle, and at low-level in the proximal tubule before renal development is complete at P0 (PubMed:28729032).</text>
</comment>
<comment type="PTM">
    <text evidence="15">Palmitoylated (PubMed:20048263). Palmitoylation facilitates the trafficking to the cilia and membrane targeting (PubMed:20048263).</text>
</comment>
<comment type="PTM">
    <text evidence="17 20">N-glycosylated.</text>
</comment>
<comment type="PTM">
    <text evidence="9 10 20">Several proteolytic cleavages occur within the extracellular domain, whereas at least one cleavage occurs within the cytoplasmic domain (PubMed:16956880). Cleaved by a probable proprotein convertase which produces an extracellular domain (polyductin extracellular domain, (PECD)) and a C-terminal fragment (polyductin transmembrane fragment (PTM)) which are tethered together by disulfide bonds (PubMed:17470460, PubMed:28729032). This extracellular domain (PECD) is then shed from the primary cilium by activation of a member of the ADAM metalloproteinase disintegrins family, resulting in concomitant release of an intra-cellular C-terminal fragment (ICD) via a gamma-secretase-dependent process (PubMed:17470460, PubMed:28729032). The proteolytic cleavage of the C-terminal intracellular fragment (ICD) is controlled by cytosolic calcium concentration and activation of PKC (PubMed:16956880).</text>
</comment>
<comment type="disruption phenotype">
    <text evidence="11 12 13 17">A mouse model, for human autosomal recessive polycystic kidney disease (ARPKD), where homozygous knockout mice for the Pkhd1 gene are born at a frequency lower than the expected Mendelian ratio (PubMed:18235088). Homozygous mice may lead to embryonic lethality (PubMed:18235088). Mice that escape embryonic lethality and survive into adulthood exhibit mild to severe tubular dilation or cyst formation in the kidney and liver accompanied by fibrosis and necrosis (PubMed:18235088). Homozygous mice for the Pkhd1 gene develop cysts and fibrosis in the liver at 1 month of age, and females develop proximal tubule (PT) dilation at 6 months of age whereas male mice never develop PT dilation (PubMed:22021705). Both male and female homozygous mice develop liver cysts and fibrosis at 3 months of age and this worsens with age until the liver is completely replaced by cysts at 12 mo of age (PubMed:22021705). A new mouse model, for ARPKD, where homozygous knockout mice for the Pkhd1 gene develop biliary dysgenesis accompanied by periportal fibrosis. Despite the progressive liver disease, these mice are viable at 12 months of age with no apparent decline in synthetic liver function. These mice also develop extrahepatic phenotypes involving the pancreas, extrahepatic bile ducts, and spleen, which occur in a more variable manner (PubMed:18202188). An other model, for ARPKD, where homozygous knockout mice for the Pkhd1 gene develop progressive renal cystic disease involving the proximal tubules, collecting ducts, and glomeruli. In the liver, mice show dilatation of the bile ducts and periportal fibrosis. Dilatation of pancreatic exocrine ducts is uniformly seen, with pancreatic cysts arising less frequently (PubMed:18286309).</text>
</comment>
<proteinExistence type="evidence at protein level"/>
<evidence type="ECO:0000250" key="1">
    <source>
        <dbReference type="UniProtKB" id="E2RK30"/>
    </source>
</evidence>
<evidence type="ECO:0000250" key="2">
    <source>
        <dbReference type="UniProtKB" id="P08F94"/>
    </source>
</evidence>
<evidence type="ECO:0000255" key="3"/>
<evidence type="ECO:0000255" key="4">
    <source>
        <dbReference type="PROSITE-ProRule" id="PRU00498"/>
    </source>
</evidence>
<evidence type="ECO:0000255" key="5">
    <source>
        <dbReference type="PROSITE-ProRule" id="PRU00817"/>
    </source>
</evidence>
<evidence type="ECO:0000255" key="6">
    <source>
        <dbReference type="PROSITE-ProRule" id="PRU01164"/>
    </source>
</evidence>
<evidence type="ECO:0000256" key="7">
    <source>
        <dbReference type="SAM" id="MobiDB-lite"/>
    </source>
</evidence>
<evidence type="ECO:0000269" key="8">
    <source>
    </source>
</evidence>
<evidence type="ECO:0000269" key="9">
    <source>
    </source>
</evidence>
<evidence type="ECO:0000269" key="10">
    <source>
    </source>
</evidence>
<evidence type="ECO:0000269" key="11">
    <source>
    </source>
</evidence>
<evidence type="ECO:0000269" key="12">
    <source>
    </source>
</evidence>
<evidence type="ECO:0000269" key="13">
    <source>
    </source>
</evidence>
<evidence type="ECO:0000269" key="14">
    <source>
    </source>
</evidence>
<evidence type="ECO:0000269" key="15">
    <source>
    </source>
</evidence>
<evidence type="ECO:0000269" key="16">
    <source>
    </source>
</evidence>
<evidence type="ECO:0000269" key="17">
    <source>
    </source>
</evidence>
<evidence type="ECO:0000269" key="18">
    <source>
    </source>
</evidence>
<evidence type="ECO:0000269" key="19">
    <source>
    </source>
</evidence>
<evidence type="ECO:0000269" key="20">
    <source>
    </source>
</evidence>
<evidence type="ECO:0000305" key="21"/>
<evidence type="ECO:0000312" key="22">
    <source>
        <dbReference type="MGI" id="MGI:2155808"/>
    </source>
</evidence>
<evidence type="ECO:0007744" key="23">
    <source>
    </source>
</evidence>
<feature type="signal peptide" evidence="3">
    <location>
        <begin position="1"/>
        <end position="18"/>
    </location>
</feature>
<feature type="chain" id="PRO_5003243036" description="Fibrocystin" evidence="3">
    <location>
        <begin position="19"/>
        <end position="4059"/>
    </location>
</feature>
<feature type="topological domain" description="Extracellular" evidence="21">
    <location>
        <begin position="19"/>
        <end position="3851"/>
    </location>
</feature>
<feature type="transmembrane region" description="Helical" evidence="3">
    <location>
        <begin position="3852"/>
        <end position="3872"/>
    </location>
</feature>
<feature type="topological domain" description="Cytoplasmic" evidence="21">
    <location>
        <begin position="3873"/>
        <end position="4059"/>
    </location>
</feature>
<feature type="domain" description="IPT/TIG 1; atypical" evidence="2">
    <location>
        <begin position="25"/>
        <end position="109"/>
    </location>
</feature>
<feature type="domain" description="IPT/TIG 2" evidence="2">
    <location>
        <begin position="135"/>
        <end position="230"/>
    </location>
</feature>
<feature type="domain" description="IPT/TIG 3" evidence="3">
    <location>
        <begin position="257"/>
        <end position="333"/>
    </location>
</feature>
<feature type="domain" description="PA14" evidence="6">
    <location>
        <begin position="323"/>
        <end position="483"/>
    </location>
</feature>
<feature type="domain" description="IPT/TIG 4" evidence="3">
    <location>
        <begin position="945"/>
        <end position="997"/>
    </location>
</feature>
<feature type="domain" description="IPT/TIG 5" evidence="3">
    <location>
        <begin position="1017"/>
        <end position="1100"/>
    </location>
</feature>
<feature type="domain" description="IPT/TIG 6; atypical" evidence="2">
    <location>
        <begin position="1106"/>
        <end position="1190"/>
    </location>
</feature>
<feature type="domain" description="IPT/TIG 7" evidence="3">
    <location>
        <begin position="1198"/>
        <end position="1266"/>
    </location>
</feature>
<feature type="domain" description="IPT/TIG 8; atypical" evidence="2">
    <location>
        <begin position="1297"/>
        <end position="1378"/>
    </location>
</feature>
<feature type="domain" description="IPT/TIG 9" evidence="3">
    <location>
        <begin position="1385"/>
        <end position="1466"/>
    </location>
</feature>
<feature type="domain" description="IPT/TIG 10" evidence="2">
    <location>
        <begin position="1482"/>
        <end position="1566"/>
    </location>
</feature>
<feature type="domain" description="IPT/TIG 11" evidence="3">
    <location>
        <begin position="1569"/>
        <end position="1637"/>
    </location>
</feature>
<feature type="domain" description="IPT/TIG 12; atypical" evidence="2">
    <location>
        <begin position="1654"/>
        <end position="1738"/>
    </location>
</feature>
<feature type="domain" description="G8 1" evidence="5">
    <location>
        <begin position="1928"/>
        <end position="2049"/>
    </location>
</feature>
<feature type="repeat" description="PbH1 1" evidence="3">
    <location>
        <begin position="2244"/>
        <end position="2266"/>
    </location>
</feature>
<feature type="repeat" description="PbH1 2" evidence="3">
    <location>
        <begin position="2287"/>
        <end position="2321"/>
    </location>
</feature>
<feature type="repeat" description="PbH1 3" evidence="3">
    <location>
        <begin position="2404"/>
        <end position="2426"/>
    </location>
</feature>
<feature type="repeat" description="PbH1 4" evidence="3">
    <location>
        <begin position="2459"/>
        <end position="2481"/>
    </location>
</feature>
<feature type="domain" description="G8 2" evidence="5">
    <location>
        <begin position="2741"/>
        <end position="2867"/>
    </location>
</feature>
<feature type="repeat" description="PbH1 5" evidence="3">
    <location>
        <begin position="3004"/>
        <end position="3026"/>
    </location>
</feature>
<feature type="repeat" description="PbH1 6" evidence="3">
    <location>
        <begin position="3027"/>
        <end position="3049"/>
    </location>
</feature>
<feature type="repeat" description="PbH1 7" evidence="3">
    <location>
        <begin position="3080"/>
        <end position="3102"/>
    </location>
</feature>
<feature type="repeat" description="PbH1 8" evidence="3">
    <location>
        <begin position="3188"/>
        <end position="3212"/>
    </location>
</feature>
<feature type="region of interest" description="Ciliary targeting sequence (CST)" evidence="15">
    <location>
        <begin position="3869"/>
        <end position="3886"/>
    </location>
</feature>
<feature type="region of interest" description="Disordered" evidence="7">
    <location>
        <begin position="3885"/>
        <end position="3915"/>
    </location>
</feature>
<feature type="region of interest" description="Nuclear localization signal (NLS)" evidence="9">
    <location>
        <begin position="3946"/>
        <end position="3970"/>
    </location>
</feature>
<feature type="region of interest" description="Disordered" evidence="7">
    <location>
        <begin position="4015"/>
        <end position="4038"/>
    </location>
</feature>
<feature type="compositionally biased region" description="Basic and acidic residues" evidence="7">
    <location>
        <begin position="3885"/>
        <end position="3898"/>
    </location>
</feature>
<feature type="site" description="Cleavage" evidence="2">
    <location>
        <begin position="3613"/>
        <end position="3614"/>
    </location>
</feature>
<feature type="glycosylation site" description="N-linked (GlcNAc...) asparagine" evidence="4">
    <location>
        <position position="55"/>
    </location>
</feature>
<feature type="glycosylation site" description="N-linked (GlcNAc...) asparagine" evidence="4">
    <location>
        <position position="224"/>
    </location>
</feature>
<feature type="glycosylation site" description="N-linked (GlcNAc...) asparagine" evidence="4">
    <location>
        <position position="355"/>
    </location>
</feature>
<feature type="glycosylation site" description="N-linked (GlcNAc...) asparagine" evidence="4">
    <location>
        <position position="385"/>
    </location>
</feature>
<feature type="glycosylation site" description="N-linked (GlcNAc...) asparagine" evidence="4">
    <location>
        <position position="518"/>
    </location>
</feature>
<feature type="glycosylation site" description="N-linked (GlcNAc...) asparagine" evidence="4">
    <location>
        <position position="527"/>
    </location>
</feature>
<feature type="glycosylation site" description="N-linked (GlcNAc...) asparagine" evidence="4">
    <location>
        <position position="620"/>
    </location>
</feature>
<feature type="glycosylation site" description="N-linked (GlcNAc...) asparagine" evidence="4">
    <location>
        <position position="639"/>
    </location>
</feature>
<feature type="glycosylation site" description="N-linked (GlcNAc...) asparagine" evidence="4">
    <location>
        <position position="709"/>
    </location>
</feature>
<feature type="glycosylation site" description="N-linked (GlcNAc...) asparagine" evidence="4">
    <location>
        <position position="867"/>
    </location>
</feature>
<feature type="glycosylation site" description="N-linked (GlcNAc...) asparagine" evidence="4">
    <location>
        <position position="965"/>
    </location>
</feature>
<feature type="glycosylation site" description="N-linked (GlcNAc...) asparagine" evidence="4">
    <location>
        <position position="975"/>
    </location>
</feature>
<feature type="glycosylation site" description="N-linked (GlcNAc...) asparagine" evidence="4">
    <location>
        <position position="1082"/>
    </location>
</feature>
<feature type="glycosylation site" description="N-linked (GlcNAc...) asparagine" evidence="4">
    <location>
        <position position="1114"/>
    </location>
</feature>
<feature type="glycosylation site" description="N-linked (GlcNAc...) asparagine" evidence="4">
    <location>
        <position position="1133"/>
    </location>
</feature>
<feature type="glycosylation site" description="N-linked (GlcNAc...) asparagine" evidence="4">
    <location>
        <position position="1239"/>
    </location>
</feature>
<feature type="glycosylation site" description="N-linked (GlcNAc...) asparagine" evidence="4">
    <location>
        <position position="1273"/>
    </location>
</feature>
<feature type="glycosylation site" description="N-linked (GlcNAc...) asparagine" evidence="4">
    <location>
        <position position="1308"/>
    </location>
</feature>
<feature type="glycosylation site" description="N-linked (GlcNAc...) asparagine" evidence="4">
    <location>
        <position position="1319"/>
    </location>
</feature>
<feature type="glycosylation site" description="N-linked (GlcNAc...) asparagine" evidence="4">
    <location>
        <position position="1344"/>
    </location>
</feature>
<feature type="glycosylation site" description="N-linked (GlcNAc...) asparagine" evidence="4">
    <location>
        <position position="1373"/>
    </location>
</feature>
<feature type="glycosylation site" description="N-linked (GlcNAc...) asparagine" evidence="4">
    <location>
        <position position="1456"/>
    </location>
</feature>
<feature type="glycosylation site" description="N-linked (GlcNAc...) asparagine" evidence="4">
    <location>
        <position position="1471"/>
    </location>
</feature>
<feature type="glycosylation site" description="N-linked (GlcNAc...) asparagine" evidence="4">
    <location>
        <position position="1528"/>
    </location>
</feature>
<feature type="glycosylation site" description="N-linked (GlcNAc...) asparagine" evidence="4">
    <location>
        <position position="1613"/>
    </location>
</feature>
<feature type="glycosylation site" description="N-linked (GlcNAc...) asparagine" evidence="4">
    <location>
        <position position="1627"/>
    </location>
</feature>
<feature type="glycosylation site" description="N-linked (GlcNAc...) asparagine" evidence="4">
    <location>
        <position position="1694"/>
    </location>
</feature>
<feature type="glycosylation site" description="N-linked (GlcNAc...) asparagine" evidence="4">
    <location>
        <position position="1760"/>
    </location>
</feature>
<feature type="glycosylation site" description="N-linked (GlcNAc...) asparagine" evidence="4">
    <location>
        <position position="1775"/>
    </location>
</feature>
<feature type="glycosylation site" description="N-linked (GlcNAc...) asparagine" evidence="4">
    <location>
        <position position="1875"/>
    </location>
</feature>
<feature type="glycosylation site" description="N-linked (GlcNAc...) asparagine" evidence="4">
    <location>
        <position position="1879"/>
    </location>
</feature>
<feature type="glycosylation site" description="N-linked (GlcNAc...) asparagine" evidence="4">
    <location>
        <position position="1915"/>
    </location>
</feature>
<feature type="glycosylation site" description="N-linked (GlcNAc...) asparagine" evidence="4">
    <location>
        <position position="1955"/>
    </location>
</feature>
<feature type="glycosylation site" description="N-linked (GlcNAc...) asparagine" evidence="4">
    <location>
        <position position="2030"/>
    </location>
</feature>
<feature type="glycosylation site" description="N-linked (GlcNAc...) asparagine" evidence="4">
    <location>
        <position position="2139"/>
    </location>
</feature>
<feature type="glycosylation site" description="N-linked (GlcNAc...) asparagine" evidence="4">
    <location>
        <position position="2380"/>
    </location>
</feature>
<feature type="glycosylation site" description="N-linked (GlcNAc...) asparagine" evidence="4">
    <location>
        <position position="2466"/>
    </location>
</feature>
<feature type="glycosylation site" description="N-linked (GlcNAc...) asparagine" evidence="4">
    <location>
        <position position="2503"/>
    </location>
</feature>
<feature type="glycosylation site" description="N-linked (GlcNAc...) asparagine" evidence="4">
    <location>
        <position position="2529"/>
    </location>
</feature>
<feature type="glycosylation site" description="N-linked (GlcNAc...) asparagine" evidence="4">
    <location>
        <position position="2547"/>
    </location>
</feature>
<feature type="glycosylation site" description="N-linked (GlcNAc...) asparagine" evidence="4">
    <location>
        <position position="2581"/>
    </location>
</feature>
<feature type="glycosylation site" description="N-linked (GlcNAc...) asparagine" evidence="4">
    <location>
        <position position="2589"/>
    </location>
</feature>
<feature type="glycosylation site" description="N-linked (GlcNAc...) asparagine" evidence="4">
    <location>
        <position position="2627"/>
    </location>
</feature>
<feature type="glycosylation site" description="N-linked (GlcNAc...) asparagine" evidence="4">
    <location>
        <position position="2747"/>
    </location>
</feature>
<feature type="glycosylation site" description="N-linked (GlcNAc...) asparagine" evidence="4">
    <location>
        <position position="2762"/>
    </location>
</feature>
<feature type="glycosylation site" description="N-linked (GlcNAc...) asparagine" evidence="4">
    <location>
        <position position="3051"/>
    </location>
</feature>
<feature type="glycosylation site" description="N-linked (GlcNAc...) asparagine" evidence="4">
    <location>
        <position position="3133"/>
    </location>
</feature>
<feature type="glycosylation site" description="N-linked (GlcNAc...) asparagine" evidence="4">
    <location>
        <position position="3162"/>
    </location>
</feature>
<feature type="glycosylation site" description="N-linked (GlcNAc...) asparagine" evidence="4">
    <location>
        <position position="3218"/>
    </location>
</feature>
<feature type="glycosylation site" description="N-linked (GlcNAc...) asparagine" evidence="4">
    <location>
        <position position="3719"/>
    </location>
</feature>
<feature type="glycosylation site" description="N-linked (GlcNAc...) asparagine" evidence="4">
    <location>
        <position position="3831"/>
    </location>
</feature>
<feature type="mutagenesis site" description="Almost completely blocks the ability to traffic to the cilia; when associated with 3872-A-A-3873. Affects palmitoylation; when associated with 3872-A-A-3873. Disrupts interaction with RAB8A; when associated with 3872-A-A-3873. Disrupts interaction with ARF4; when associated with 3872-A-A-3873." evidence="15 18">
    <original>C</original>
    <variation>A</variation>
    <location>
        <position position="3869"/>
    </location>
</feature>
<feature type="mutagenesis site" description="Little affects the ability to traffic to the cilia. Does not affect interaction with RAB8A. Does not affect interaction with ARF4." evidence="15 18">
    <original>LV</original>
    <variation>AA</variation>
    <location>
        <begin position="3870"/>
        <end position="3871"/>
    </location>
</feature>
<feature type="mutagenesis site" description="Almost completely blocks the ability to traffic to the cilia; when associated with A-3869. Affetcs palmitoylation; when associated with A-3869. Disrupts interaction with RAB8A; when associated with A-3869. Disrupts interaction with ARF4; when associated with A-3869." evidence="15 18">
    <original>CC</original>
    <variation>AA</variation>
    <location>
        <begin position="3872"/>
        <end position="3873"/>
    </location>
</feature>
<feature type="mutagenesis site" description="Reduces the ability to traffic to the cilia. Reduces interaction with RAB8A." evidence="15">
    <original>WF</original>
    <variation>AA</variation>
    <location>
        <begin position="3874"/>
        <end position="3875"/>
    </location>
</feature>
<feature type="mutagenesis site" description="Reduces the ability to traffic to the cilia." evidence="15">
    <original>KKS</original>
    <variation>AAA</variation>
    <location>
        <begin position="3876"/>
        <end position="3878"/>
    </location>
</feature>
<feature type="mutagenesis site" description="Prevents ciliary localizytion." evidence="19">
    <original>KTRKIKP</original>
    <variation>AAAAAAA</variation>
    <location>
        <begin position="3879"/>
        <end position="3885"/>
    </location>
</feature>
<feature type="mutagenesis site" description="Almost completely blocks the ability to traffic to cilia. Disrupts interaction with RAB8A. Disrupts interaction with ARF4." evidence="15 18">
    <original>KTRK</original>
    <variation>AAAA</variation>
    <location>
        <begin position="3879"/>
        <end position="3882"/>
    </location>
</feature>
<feature type="mutagenesis site" description="Reduces the ability to traffic to the cilia. Reduces interaction with RAB8A. Does not affect interaction with ARF4." evidence="15 18">
    <original>IKP</original>
    <variation>AAA</variation>
    <location>
        <begin position="3883"/>
        <end position="3885"/>
    </location>
</feature>
<organism>
    <name type="scientific">Mus musculus</name>
    <name type="common">Mouse</name>
    <dbReference type="NCBI Taxonomy" id="10090"/>
    <lineage>
        <taxon>Eukaryota</taxon>
        <taxon>Metazoa</taxon>
        <taxon>Chordata</taxon>
        <taxon>Craniata</taxon>
        <taxon>Vertebrata</taxon>
        <taxon>Euteleostomi</taxon>
        <taxon>Mammalia</taxon>
        <taxon>Eutheria</taxon>
        <taxon>Euarchontoglires</taxon>
        <taxon>Glires</taxon>
        <taxon>Rodentia</taxon>
        <taxon>Myomorpha</taxon>
        <taxon>Muroidea</taxon>
        <taxon>Muridae</taxon>
        <taxon>Murinae</taxon>
        <taxon>Mus</taxon>
        <taxon>Mus</taxon>
    </lineage>
</organism>
<reference key="1">
    <citation type="journal article" date="2009" name="PLoS Biol.">
        <title>Lineage-specific biology revealed by a finished genome assembly of the mouse.</title>
        <authorList>
            <person name="Church D.M."/>
            <person name="Goodstadt L."/>
            <person name="Hillier L.W."/>
            <person name="Zody M.C."/>
            <person name="Goldstein S."/>
            <person name="She X."/>
            <person name="Bult C.J."/>
            <person name="Agarwala R."/>
            <person name="Cherry J.L."/>
            <person name="DiCuccio M."/>
            <person name="Hlavina W."/>
            <person name="Kapustin Y."/>
            <person name="Meric P."/>
            <person name="Maglott D."/>
            <person name="Birtle Z."/>
            <person name="Marques A.C."/>
            <person name="Graves T."/>
            <person name="Zhou S."/>
            <person name="Teague B."/>
            <person name="Potamousis K."/>
            <person name="Churas C."/>
            <person name="Place M."/>
            <person name="Herschleb J."/>
            <person name="Runnheim R."/>
            <person name="Forrest D."/>
            <person name="Amos-Landgraf J."/>
            <person name="Schwartz D.C."/>
            <person name="Cheng Z."/>
            <person name="Lindblad-Toh K."/>
            <person name="Eichler E.E."/>
            <person name="Ponting C.P."/>
        </authorList>
    </citation>
    <scope>NUCLEOTIDE SEQUENCE [LARGE SCALE GENOMIC DNA]</scope>
    <source>
        <strain>C57BL/6J</strain>
    </source>
</reference>
<reference key="2">
    <citation type="journal article" date="2005" name="Biochem. Biophys. Res. Commun.">
        <title>Fibrocystin interacts with CAML, a protein involved in Ca2+ signaling.</title>
        <authorList>
            <person name="Nagano J."/>
            <person name="Kitamura K."/>
            <person name="Hujer K.M."/>
            <person name="Ward C.J."/>
            <person name="Bram R.J."/>
            <person name="Hopfer U."/>
            <person name="Tomita K."/>
            <person name="Huang C."/>
            <person name="Miller R.T."/>
        </authorList>
    </citation>
    <scope>INTERACTION WITH CAMLG</scope>
</reference>
<reference key="3">
    <citation type="journal article" date="2006" name="J. Biol. Chem.">
        <title>Proteolytic cleavage and nuclear translocation of fibrocystin is regulated by intracellular Ca2+ and activation of protein kinase C.</title>
        <authorList>
            <person name="Hiesberger T."/>
            <person name="Gourley E."/>
            <person name="Erickson A."/>
            <person name="Koulen P."/>
            <person name="Ward C.J."/>
            <person name="Masyuk T.V."/>
            <person name="Larusso N.F."/>
            <person name="Harris P.C."/>
            <person name="Igarashi P."/>
        </authorList>
    </citation>
    <scope>PROTEOLYTIC PROCESSING</scope>
    <scope>SUBCELLULAR LOCATION</scope>
    <scope>REGION</scope>
</reference>
<reference key="4">
    <citation type="journal article" date="2007" name="Hum. Mol. Genet.">
        <title>Polyductin undergoes notch-like processing and regulated release from primary cilia.</title>
        <authorList>
            <person name="Kaimori J.Y."/>
            <person name="Nagasawa Y."/>
            <person name="Menezes L.F."/>
            <person name="Garcia-Gonzalez M.A."/>
            <person name="Deng J."/>
            <person name="Imai E."/>
            <person name="Onuchic L.F."/>
            <person name="Guay-Woodford L.M."/>
            <person name="Germino G.G."/>
        </authorList>
    </citation>
    <scope>SHEDDING</scope>
    <scope>SUBCELLULAR LOCATION</scope>
</reference>
<reference key="5">
    <citation type="journal article" date="2008" name="Am. J. Pathol.">
        <title>Biliary and pancreatic dysgenesis in mice harboring a mutation in Pkhd1.</title>
        <authorList>
            <person name="Gallagher A.R."/>
            <person name="Esquivel E.L."/>
            <person name="Briere T.S."/>
            <person name="Tian X."/>
            <person name="Mitobe M."/>
            <person name="Menezes L.F."/>
            <person name="Markowitz G.S."/>
            <person name="Jain D."/>
            <person name="Onuchic L.F."/>
            <person name="Somlo S."/>
        </authorList>
    </citation>
    <scope>DISRUPTION PHENOTYPE</scope>
    <scope>SUBCELLULAR LOCATION</scope>
    <scope>TISSUE SPECIFICITY</scope>
</reference>
<reference key="6">
    <citation type="journal article" date="2008" name="J. Am. Soc. Nephrol.">
        <title>Fibrocystin/polyductin modulates renal tubular formation by regulating polycystin-2 expression and function.</title>
        <authorList>
            <person name="Kim I."/>
            <person name="Fu Y."/>
            <person name="Hui K."/>
            <person name="Moeckel G."/>
            <person name="Mai W."/>
            <person name="Li C."/>
            <person name="Liang D."/>
            <person name="Zhao P."/>
            <person name="Ma J."/>
            <person name="Chen X.Z."/>
            <person name="George A.L. Jr."/>
            <person name="Coffey R.J."/>
            <person name="Feng Z.P."/>
            <person name="Wu G."/>
        </authorList>
    </citation>
    <scope>DISRUPTION PHENOTYPE</scope>
    <scope>FUNCTION</scope>
    <scope>INTERACTION WITH PKD2</scope>
</reference>
<reference key="7">
    <citation type="journal article" date="2008" name="Pediatr. Nephrol.">
        <title>Kidney cysts, pancreatic cysts, and biliary disease in a mouse model of autosomal recessive polycystic kidney disease.</title>
        <authorList>
            <person name="Williams S.S."/>
            <person name="Cobo-Stark P."/>
            <person name="James L.R."/>
            <person name="Somlo S."/>
            <person name="Igarashi P."/>
        </authorList>
    </citation>
    <scope>DISRUPTION PHENOTYPE</scope>
</reference>
<reference evidence="23" key="8">
    <citation type="journal article" date="2010" name="Cell">
        <title>A tissue-specific atlas of mouse protein phosphorylation and expression.</title>
        <authorList>
            <person name="Huttlin E.L."/>
            <person name="Jedrychowski M.P."/>
            <person name="Elias J.E."/>
            <person name="Goswami T."/>
            <person name="Rad R."/>
            <person name="Beausoleil S.A."/>
            <person name="Villen J."/>
            <person name="Haas W."/>
            <person name="Sowa M.E."/>
            <person name="Gygi S.P."/>
        </authorList>
    </citation>
    <scope>IDENTIFICATION BY MASS SPECTROMETRY [LARGE SCALE ANALYSIS]</scope>
</reference>
<reference key="9">
    <citation type="journal article" date="2010" name="J. Am. Soc. Nephrol.">
        <title>Loss of oriented cell division does not initiate cyst formation.</title>
        <authorList>
            <person name="Nishio S."/>
            <person name="Tian X."/>
            <person name="Gallagher A.R."/>
            <person name="Yu Z."/>
            <person name="Patel V."/>
            <person name="Igarashi P."/>
            <person name="Somlo S."/>
        </authorList>
    </citation>
    <scope>FUNCTION</scope>
</reference>
<reference key="10">
    <citation type="journal article" date="2010" name="J. Cell Biol.">
        <title>The cytoplasmic tail of fibrocystin contains a ciliary targeting sequence.</title>
        <authorList>
            <person name="Follit J.A."/>
            <person name="Li L."/>
            <person name="Vucica Y."/>
            <person name="Pazour G.J."/>
        </authorList>
    </citation>
    <scope>SUBCELLULAR LOCATION</scope>
    <scope>MUTAGENESIS OF CYS-3869; 3870-LEU-VAL-3871; 3872-CYS-CYS-3873; 3874-TRP-PHE-3875; 3876-LYS--SER-3878; 3879-LYS--LYS-3882 AND 3883-ILE--PRO-3885</scope>
    <scope>PALMITOYLATION</scope>
    <scope>INTERACTION WITH RAB8A</scope>
    <scope>REGION</scope>
</reference>
<reference key="11">
    <citation type="journal article" date="2011" name="Exp. Cell Res.">
        <title>Cystogenesis in ARPKD results from increased apoptosis in collecting duct epithelial cells of Pkhd1 mutant kidneys.</title>
        <authorList>
            <person name="Hu B."/>
            <person name="He X."/>
            <person name="Li A."/>
            <person name="Qiu Q."/>
            <person name="Li C."/>
            <person name="Liang D."/>
            <person name="Zhao P."/>
            <person name="Ma J."/>
            <person name="Coffey R.J."/>
            <person name="Zhan Q."/>
            <person name="Wu G."/>
        </authorList>
    </citation>
    <scope>FUNCTION</scope>
</reference>
<reference key="12">
    <citation type="journal article" date="2011" name="J. Am. Soc. Nephrol.">
        <title>Epitope-tagged Pkhd1 tracks the processing, secretion, and localization of fibrocystin.</title>
        <authorList>
            <person name="Bakeberg J.L."/>
            <person name="Tammachote R."/>
            <person name="Woollard J.R."/>
            <person name="Hogan M.C."/>
            <person name="Tuan H.F."/>
            <person name="Li M."/>
            <person name="van Deursen J.M."/>
            <person name="Wu Y."/>
            <person name="Huang B.Q."/>
            <person name="Torres V.E."/>
            <person name="Harris P.C."/>
            <person name="Ward C.J."/>
        </authorList>
    </citation>
    <scope>DISRUPTION PHENOTYPE</scope>
    <scope>GLYCOSYLATION</scope>
    <scope>PROTEOLYTIC PROCESSING</scope>
    <scope>SUBCELLULAR LOCATION</scope>
</reference>
<reference key="13">
    <citation type="journal article" date="2014" name="PLoS Genet.">
        <title>Arf4 is required for Mammalian development but dispensable for ciliary assembly.</title>
        <authorList>
            <person name="Follit J.A."/>
            <person name="San Agustin J.T."/>
            <person name="Jonassen J.A."/>
            <person name="Huang T."/>
            <person name="Rivera-Perez J.A."/>
            <person name="Tremblay K.D."/>
            <person name="Pazour G.J."/>
        </authorList>
    </citation>
    <scope>INTERACTION WITH ARF4</scope>
    <scope>MUTAGENESIS OF CYS-3869; 3870-LEU-VAL-3871; 3872-CYS-CYS-3873; 3879-LYS--LYS-3882 AND 3883-ILE--PRO-3885</scope>
</reference>
<reference key="14">
    <citation type="journal article" date="2017" name="J. Cell Biol.">
        <title>Tubby family proteins are adapters for ciliary trafficking of integral membrane proteins.</title>
        <authorList>
            <person name="Badgandi H.B."/>
            <person name="Hwang S.H."/>
            <person name="Shimada I.S."/>
            <person name="Loriot E."/>
            <person name="Mukhopadhyay S."/>
        </authorList>
    </citation>
    <scope>SUBCELLULAR LOCATION</scope>
    <scope>MUTAGENESIS OF 3879-LYS--PRO-3885</scope>
    <scope>INTERACTION WITH TULP3</scope>
</reference>
<reference key="15">
    <citation type="journal article" date="2017" name="Kidney Int.">
        <title>A novel model of autosomal recessive polycystic kidney questions the role of the fibrocystin C-terminus in disease mechanism.</title>
        <authorList>
            <person name="Outeda P."/>
            <person name="Menezes L."/>
            <person name="Hartung E.A."/>
            <person name="Bridges S."/>
            <person name="Zhou F."/>
            <person name="Zhu X."/>
            <person name="Xu H."/>
            <person name="Huang Q."/>
            <person name="Yao Q."/>
            <person name="Qian F."/>
            <person name="Germino G.G."/>
            <person name="Watnick T."/>
        </authorList>
    </citation>
    <scope>TISSUE SPECIFICITY</scope>
    <scope>PROTEOLYTIC PROCESSING</scope>
    <scope>SUBCELLULAR LOCATION</scope>
    <scope>GLYCOSYLATION</scope>
</reference>
<sequence>MMLAWLVSLLSMEVLLLAKPYSSFQFEPAEGSLAGGTWITVVFDGLDRSILYPNNGSQLQIDLVSVAIPTLRIPCDVSPAFVDLPVVTCQTRSLPSEADAGPYSLEMRSGEQVLGTPCPGSLDSCTFKFSKDQTPVLYQVYPASGVPGEVVSVYGRVITTWLETFDPDVDYIESPLILEAREDKWLTPCSLINRQTGSCFPIQEEHGLGNVQCRVEGDYIGSQNVSFSVFNKGRSMVHKEAWLISAKQELFLYQTYPEILSVFPKVGSLGGRTDIIITGDFFDPSARVTIAGIPCDIRYVSPRKIECTTRAPGNEARLTAPQAGNRGLRFEVGDATKDVELTEATPGYRWQIVPNASSPSGFWSKEGRPFRARLSGFFVAPQTNNYTFWIQADSQASLCFSSSEEPRTKVEVASVGVGTADWFDSWEQIGNEGSWHQKTTKLELQGGAKYYLEAEQHGIAPSRGMRIGVQIHNTWLNPDVVNTYLLEKHQIRARAQRLPEIQVLHVSGKGNFFLTWGNVSSQPVPANATAQQIQTTIEELLVVKCNLAPFSAHVLLRLGFEQGLEGSRSDGVRTSSTEPFCGRFSLGQLGHLILIPEAADKGYQLDRYPYLCLAYRGHMNKTLDMTVSFLFGFQTIMKNITCDWSLTDPHPESWQFTCINLWDTCLCHSEDIQSSLANTPLLAHRIDIRPVVPEAGLLYVDEIILADTNVTVSQADSGRACPGGNVVESVSVVGVPPVYSISSWLAGCGSELPLITACSVSTEGTGDGSELIEVTAQRLQRTSPPLGGHFFLYLSDTVIPDVPVRMSARQLHKLLQDSADESTSGYLNAGDFTVTEDLNSCYEHVWTLSWTTQTGDLPNFIRVSDQNLTGVNPTVTARVVYDGGVFLGPIFGDMLATANQQTQVAVQVNDIPAYCSGSCSFQYQQESTPSVDHVWYSLGSDVNLLVHFTGTGFPRDTQFLQVTVNKTSCEVLFSNETNVACELALLPVGVHQIFMLVIPSGLAVHASGEDLLLHVEPRLDAVEPSTAAEIGGRWVTLRGSSLEGVSLVLFGTQSCVIDAIRSNSQQIQCKVPPRGKDGYTVNVTVISGDHSTVLARAFTYVSSLNPVIVSLSRNRSSIAGGEILFLGMSLLVNYTDLDVQIHVQDTSAQVLSQTAWGLEVVLPPLVPGIHVISAFINGVSIRSQGVDLYIQYLTEVFSVEPCSGSLLGGTLLSLLGTGLGRDPALIRVLVDNHPCDIVNLTEVNIWCETPPAVLPPRADVLTVLASVEIWAGNTSFFHGPSLVGKGFTFTYEAAATPVVTAMWGEFRNNSVRFYVEGSNISDSVILLGSLKCELEVQFFGDSMNLSGCFFPLHSLEAGVYTLQVRHKRMGFANMSVVPQKFELSPQIIAIFPTHGSKCGGTVLTVKGMAFSSRKRSVHVDISGPFACMILSLEDHTVLCQTRFVGDQFSEASLALNITVLVNGLTSKCKGNCTLFIEEAATPIVDALTISISGSLTMVLMRGRRLATTADEPIAFVDDQLPCHTTFFNTSHVACQIRDLAPGFHYLSAVHTSAGYACLNSVSRNFFIVPQVLDYFPKDFSIHGGSLLTIKGTALRGWKATVVYVGRQACLTVNFSSDFIQCIVPAGNGSAALEIDVNGVLYHIGLVDYSSIFTPELLSVSRSQDILTFTVARISGAANVDIFIGTSPCLGVAGNRTVLQCMVPLLPAGEYLVTGYDHSRGWASSTLILVLRATVTSVTKNYGCLGGRLLHVLGAGFSPGNISAAVCGAPCQVLANATVSAFSCLVLPLHVSLAFLCDLRHAEDSCKVRSSTYLRCDLTVSMGTERLPGSWPYVYLCEESSLCLFEPDHWTESVFPSFSGLFLSPKVERDEVLIYNSSCNITMETEAEMECEMPNQPITAKITEIQKSWGQNTQGNFSFQFCRRWSRPHSWFPQRVPHDGDSVTVETGHLLLLDANTSFLNSLHIKGGKLIFMDPGPIELRAHSILITDGGELHIGSEEKPFQGKARIKIYGSVHSTPFFPYGVKFLAVRNGTLSLHGSVPEVTVTYLQAAAHAGDKVLTLGEAVDWKPGDEAVITSGMTVAGAEATEVVVVETVHNADLHLRNPLRYSYDFRENWVAGENPILKPTVALLSRNIIIQGNFTLERVKLLNSCQEANTAKGNLKHCLYSKSEKMLGARDLGARVIIQSFPEEPSFVKLKGVQFRDLGQAFHKHLSSLALVGAMRGSYIQSCSVWNSFSRGLSMHRTWGLKVDSNVFYKIVGHALLLGSYLDGRFSTSETVTGRKNGWWEQGSTIRNNVIISVSAAEGLSGSEMLAPAGIYTFSPTNVMEGNRVCAAGYGYVFHLVTSQTLQAPLLSFNWNTAHSCTRYGLLVYPKFQPPWNNDTGFTLFQNFMVWGSAGGAQIFRSNNLHLKNFQVYACRDFGIDILESDANTLITDSFLLGHFTHKGSLCMSAGIKTPQRWELTISNTTFVNFDGNCVAIRTCSGCFQGQGGYTVKTRQLKFVNSSNLVAFPFPHAAVLEDLDGSLSGKNGSHVLASMETLSDTCLTNASFSQIVPGSVCGEAVLFHRMSIALANSLDVPKNLTITDISNKTITVNYVEDTLSNYYGWMALLLDQETYSLQFESPWMNRSLQYSATFDSFAPGNYLLIMHRDLPPYPDILLRCGSQVGHSLPFHPLPSQDRACDWFFNRQLRQLTYLVSGEGQVKVFLQLKPGVPPSVSASTSVPESASRWSLPETWQDVEKGWGGYNHTIPGPGDDVLILPNKTVLVDTDLPVLRCLYVMGTLEFPVDRSNVLSVACLLIAGGELKVGTLENPLEKDQRLLIFLRASEEVVCDYFEGIHVDPGTIGVYGKLRLHSAYPKKSWVHLGADIAPGNERIIVHNAVDWQPHDTIVLSSSSYEAHEAEVLTVKEVKGHHIRIYERLKHRHIGSTHTMEDGQQVHLAAEVGLLTRNIRIQPDSSCRGRLLVGSFRKSSGEDFSGVLQLLNVEIQNMGLPLYSSIEFTGVSAGSWVISSTVHQSCSVGIHASSSHGVILTDNVVFGTNGHGIDVEGQNYSLTNNLVILTMQSANSSPWVAGIKVNYAEDIILHGNVVAGSERLGFHVGGHGCSSEVLWSDNVVHSSLHGLHLYKKHESNNCTGVSGFMAFKNFDYGAMVQTENSVDIQNITLVDNTVGLLAITYVSSALLSSVSTVQITLRNSVIVATSSSFDCIHDRKAPQSANWTSTDRAPSNPRGGRIGILWPVSASEPNAWPQEPWHKVRSRHSVPGIMKLQDVTFSSFVKSCYSNDLDVCILPNEYSTGVMYPITAERTRMLGIKDKNKFYFPVLQSSKDLVGTICPTLVCEYPRKYLFTDLDGRTLGLPPPVSVFPRTEEEWTGSFLNTGIFREEQKCTFRAMNQGFFCKQTEHAVLILDNVDATWTIPKSHPLVSVTNGFVDTFSIVKDSDLCPPTSSLSTFYSILPTRQMTKVCFPEQTPPFLRFLLLGNQRASKLILAVFYNEIQSPHVFLDKSFIPPTPLESAFSLLAEPSGANYFDIMNNLLYVVLQGEEPVEIHSSVSIHLALTVTFSVLEKGWERAMLESLSDFFQIDPNQIRLTLEMPGNKETLEAIANSERKRKRNCPSVTCGGPSIRYGQRRPLMAEMTSLKITPATTLETFSKVIVIEVGDLPNIRNSEPIQSLPSNRLQRLVNQVITAQQTGALENVLGMTVGALLVTQSKGVTGYRNASSLITGNLIYTRPSELSILVQPSDGEVGIELPVQPRLVFLDEKNERVESLGLPSEPWIISVSLEGASESVLKGCTLAETRDGYVTFSRLAVLISGSNWHLFFTVISPPGTNFTARSRTFVVLPVASKERSTIILALSLCSVASWVALSCLVCCWFKKSKTRKIKPEDISESQAKEQKKNTHNSSKPRGLQAKTAKENTLMGEDMRMKVMQGMQSQFPQHSMDGVSKRKVSRLAVTEERTTTPAPKIPRITCVPGSLAQQLTLQEPGNWQEAQQQLLRYQLAGRNQLLLLRPDLRQERKQGQEPSQLDKGSDCTGLSQEKATCIPTETFSLHTAPPETIQ</sequence>
<protein>
    <recommendedName>
        <fullName evidence="21">Fibrocystin</fullName>
    </recommendedName>
    <alternativeName>
        <fullName>Polycystic kidney and hepatic disease 1 protein</fullName>
    </alternativeName>
    <alternativeName>
        <fullName>Polyductin</fullName>
    </alternativeName>
</protein>
<name>PKHD1_MOUSE</name>
<dbReference type="EMBL" id="AC101729">
    <property type="status" value="NOT_ANNOTATED_CDS"/>
    <property type="molecule type" value="Genomic_DNA"/>
</dbReference>
<dbReference type="EMBL" id="AC101789">
    <property type="status" value="NOT_ANNOTATED_CDS"/>
    <property type="molecule type" value="Genomic_DNA"/>
</dbReference>
<dbReference type="EMBL" id="AC161178">
    <property type="status" value="NOT_ANNOTATED_CDS"/>
    <property type="molecule type" value="Genomic_DNA"/>
</dbReference>
<dbReference type="EMBL" id="AC166488">
    <property type="status" value="NOT_ANNOTATED_CDS"/>
    <property type="molecule type" value="Genomic_DNA"/>
</dbReference>
<dbReference type="EMBL" id="AC166770">
    <property type="status" value="NOT_ANNOTATED_CDS"/>
    <property type="molecule type" value="Genomic_DNA"/>
</dbReference>
<dbReference type="CCDS" id="CCDS14841.1"/>
<dbReference type="RefSeq" id="NP_694819.2">
    <property type="nucleotide sequence ID" value="NM_153179.3"/>
</dbReference>
<dbReference type="CORUM" id="E9PZ36"/>
<dbReference type="FunCoup" id="E9PZ36">
    <property type="interactions" value="45"/>
</dbReference>
<dbReference type="IntAct" id="E9PZ36">
    <property type="interactions" value="1"/>
</dbReference>
<dbReference type="STRING" id="10090.ENSMUSP00000085794"/>
<dbReference type="GlyCosmos" id="E9PZ36">
    <property type="glycosylation" value="51 sites, No reported glycans"/>
</dbReference>
<dbReference type="GlyGen" id="E9PZ36">
    <property type="glycosylation" value="51 sites"/>
</dbReference>
<dbReference type="iPTMnet" id="E9PZ36"/>
<dbReference type="PhosphoSitePlus" id="E9PZ36"/>
<dbReference type="SwissPalm" id="E9PZ36"/>
<dbReference type="PaxDb" id="10090-ENSMUSP00000085794"/>
<dbReference type="ProteomicsDB" id="363285"/>
<dbReference type="Antibodypedia" id="30875">
    <property type="antibodies" value="165 antibodies from 12 providers"/>
</dbReference>
<dbReference type="DNASU" id="241035"/>
<dbReference type="Ensembl" id="ENSMUST00000088448.12">
    <property type="protein sequence ID" value="ENSMUSP00000085794.6"/>
    <property type="gene ID" value="ENSMUSG00000043760.17"/>
</dbReference>
<dbReference type="GeneID" id="241035"/>
<dbReference type="KEGG" id="mmu:241035"/>
<dbReference type="UCSC" id="uc007akv.1">
    <property type="organism name" value="mouse"/>
</dbReference>
<dbReference type="AGR" id="MGI:2155808"/>
<dbReference type="CTD" id="5314"/>
<dbReference type="MGI" id="MGI:2155808">
    <property type="gene designation" value="Pkhd1"/>
</dbReference>
<dbReference type="VEuPathDB" id="HostDB:ENSMUSG00000043760"/>
<dbReference type="eggNOG" id="ENOG502QR85">
    <property type="taxonomic scope" value="Eukaryota"/>
</dbReference>
<dbReference type="GeneTree" id="ENSGT00940000160697"/>
<dbReference type="HOGENOM" id="CLU_000057_1_0_1"/>
<dbReference type="InParanoid" id="E9PZ36"/>
<dbReference type="OMA" id="NFMVWGS"/>
<dbReference type="OrthoDB" id="120976at2759"/>
<dbReference type="PhylomeDB" id="E9PZ36"/>
<dbReference type="TreeFam" id="TF329582"/>
<dbReference type="BioGRID-ORCS" id="241035">
    <property type="hits" value="1 hit in 75 CRISPR screens"/>
</dbReference>
<dbReference type="ChiTaRS" id="Pkhd1">
    <property type="organism name" value="mouse"/>
</dbReference>
<dbReference type="PRO" id="PR:E9PZ36"/>
<dbReference type="Proteomes" id="UP000000589">
    <property type="component" value="Chromosome 1"/>
</dbReference>
<dbReference type="RNAct" id="E9PZ36">
    <property type="molecule type" value="protein"/>
</dbReference>
<dbReference type="Bgee" id="ENSMUSG00000043760">
    <property type="expression patterns" value="Expressed in urinary bladder urothelium and 68 other cell types or tissues"/>
</dbReference>
<dbReference type="GO" id="GO:0097731">
    <property type="term" value="C:9+0 non-motile cilium"/>
    <property type="evidence" value="ECO:0000314"/>
    <property type="project" value="MGI"/>
</dbReference>
<dbReference type="GO" id="GO:0016324">
    <property type="term" value="C:apical plasma membrane"/>
    <property type="evidence" value="ECO:0000314"/>
    <property type="project" value="UniProtKB"/>
</dbReference>
<dbReference type="GO" id="GO:0005813">
    <property type="term" value="C:centrosome"/>
    <property type="evidence" value="ECO:0007669"/>
    <property type="project" value="Ensembl"/>
</dbReference>
<dbReference type="GO" id="GO:0000775">
    <property type="term" value="C:chromosome, centromeric region"/>
    <property type="evidence" value="ECO:0007669"/>
    <property type="project" value="UniProtKB-SubCell"/>
</dbReference>
<dbReference type="GO" id="GO:0036064">
    <property type="term" value="C:ciliary basal body"/>
    <property type="evidence" value="ECO:0007669"/>
    <property type="project" value="Ensembl"/>
</dbReference>
<dbReference type="GO" id="GO:0005929">
    <property type="term" value="C:cilium"/>
    <property type="evidence" value="ECO:0000314"/>
    <property type="project" value="UniProtKB"/>
</dbReference>
<dbReference type="GO" id="GO:0005829">
    <property type="term" value="C:cytosol"/>
    <property type="evidence" value="ECO:0007669"/>
    <property type="project" value="Ensembl"/>
</dbReference>
<dbReference type="GO" id="GO:0005783">
    <property type="term" value="C:endoplasmic reticulum"/>
    <property type="evidence" value="ECO:0000314"/>
    <property type="project" value="UniProtKB"/>
</dbReference>
<dbReference type="GO" id="GO:0070062">
    <property type="term" value="C:extracellular exosome"/>
    <property type="evidence" value="ECO:0000314"/>
    <property type="project" value="UniProtKB"/>
</dbReference>
<dbReference type="GO" id="GO:0005794">
    <property type="term" value="C:Golgi apparatus"/>
    <property type="evidence" value="ECO:0000314"/>
    <property type="project" value="UniProtKB"/>
</dbReference>
<dbReference type="GO" id="GO:0072686">
    <property type="term" value="C:mitotic spindle"/>
    <property type="evidence" value="ECO:0007669"/>
    <property type="project" value="Ensembl"/>
</dbReference>
<dbReference type="GO" id="GO:0005634">
    <property type="term" value="C:nucleus"/>
    <property type="evidence" value="ECO:0007669"/>
    <property type="project" value="UniProtKB-SubCell"/>
</dbReference>
<dbReference type="GO" id="GO:0048471">
    <property type="term" value="C:perinuclear region of cytoplasm"/>
    <property type="evidence" value="ECO:0007669"/>
    <property type="project" value="Ensembl"/>
</dbReference>
<dbReference type="GO" id="GO:0048754">
    <property type="term" value="P:branching morphogenesis of an epithelial tube"/>
    <property type="evidence" value="ECO:0000315"/>
    <property type="project" value="UniProtKB"/>
</dbReference>
<dbReference type="GO" id="GO:0045216">
    <property type="term" value="P:cell-cell junction organization"/>
    <property type="evidence" value="ECO:0000315"/>
    <property type="project" value="UniProtKB"/>
</dbReference>
<dbReference type="GO" id="GO:0060271">
    <property type="term" value="P:cilium assembly"/>
    <property type="evidence" value="ECO:0000315"/>
    <property type="project" value="MGI"/>
</dbReference>
<dbReference type="GO" id="GO:0003382">
    <property type="term" value="P:epithelial cell morphogenesis"/>
    <property type="evidence" value="ECO:0000250"/>
    <property type="project" value="UniProtKB"/>
</dbReference>
<dbReference type="GO" id="GO:0051660">
    <property type="term" value="P:establishment of centrosome localization"/>
    <property type="evidence" value="ECO:0000250"/>
    <property type="project" value="UniProtKB"/>
</dbReference>
<dbReference type="GO" id="GO:0000132">
    <property type="term" value="P:establishment of mitotic spindle orientation"/>
    <property type="evidence" value="ECO:0000315"/>
    <property type="project" value="UniProtKB"/>
</dbReference>
<dbReference type="GO" id="GO:0006874">
    <property type="term" value="P:intracellular calcium ion homeostasis"/>
    <property type="evidence" value="ECO:0007669"/>
    <property type="project" value="Ensembl"/>
</dbReference>
<dbReference type="GO" id="GO:0001822">
    <property type="term" value="P:kidney development"/>
    <property type="evidence" value="ECO:0000314"/>
    <property type="project" value="MGI"/>
</dbReference>
<dbReference type="GO" id="GO:1904036">
    <property type="term" value="P:negative regulation of epithelial cell apoptotic process"/>
    <property type="evidence" value="ECO:0000315"/>
    <property type="project" value="UniProtKB"/>
</dbReference>
<dbReference type="GO" id="GO:0051898">
    <property type="term" value="P:negative regulation of phosphatidylinositol 3-kinase/protein kinase B signal transduction"/>
    <property type="evidence" value="ECO:0007669"/>
    <property type="project" value="Ensembl"/>
</dbReference>
<dbReference type="GO" id="GO:0050679">
    <property type="term" value="P:positive regulation of epithelial cell proliferation"/>
    <property type="evidence" value="ECO:0000315"/>
    <property type="project" value="UniProtKB"/>
</dbReference>
<dbReference type="GO" id="GO:0030155">
    <property type="term" value="P:regulation of cell adhesion"/>
    <property type="evidence" value="ECO:0000250"/>
    <property type="project" value="UniProtKB"/>
</dbReference>
<dbReference type="GO" id="GO:0022407">
    <property type="term" value="P:regulation of cell-cell adhesion"/>
    <property type="evidence" value="ECO:0000250"/>
    <property type="project" value="UniProtKB"/>
</dbReference>
<dbReference type="GO" id="GO:0001952">
    <property type="term" value="P:regulation of cell-matrix adhesion"/>
    <property type="evidence" value="ECO:0000250"/>
    <property type="project" value="UniProtKB"/>
</dbReference>
<dbReference type="GO" id="GO:0010824">
    <property type="term" value="P:regulation of centrosome duplication"/>
    <property type="evidence" value="ECO:0007669"/>
    <property type="project" value="Ensembl"/>
</dbReference>
<dbReference type="GO" id="GO:1904054">
    <property type="term" value="P:regulation of cholangiocyte proliferation"/>
    <property type="evidence" value="ECO:0000250"/>
    <property type="project" value="UniProtKB"/>
</dbReference>
<dbReference type="GO" id="GO:0070372">
    <property type="term" value="P:regulation of ERK1 and ERK2 cascade"/>
    <property type="evidence" value="ECO:0007669"/>
    <property type="project" value="Ensembl"/>
</dbReference>
<dbReference type="GO" id="GO:0090175">
    <property type="term" value="P:regulation of establishment of planar polarity"/>
    <property type="evidence" value="ECO:0000315"/>
    <property type="project" value="UniProtKB"/>
</dbReference>
<dbReference type="GO" id="GO:0032006">
    <property type="term" value="P:regulation of TOR signaling"/>
    <property type="evidence" value="ECO:0007669"/>
    <property type="project" value="Ensembl"/>
</dbReference>
<dbReference type="CDD" id="cd00603">
    <property type="entry name" value="IPT_PCSR"/>
    <property type="match status" value="4"/>
</dbReference>
<dbReference type="FunFam" id="2.60.40.10:FF:000889">
    <property type="entry name" value="fibrocystin isoform X1"/>
    <property type="match status" value="1"/>
</dbReference>
<dbReference type="FunFam" id="2.160.20.10:FF:000034">
    <property type="entry name" value="PKHD1, fibrocystin/polyductin"/>
    <property type="match status" value="1"/>
</dbReference>
<dbReference type="FunFam" id="2.60.40.10:FF:000871">
    <property type="entry name" value="PKHD1, fibrocystin/polyductin"/>
    <property type="match status" value="1"/>
</dbReference>
<dbReference type="FunFam" id="2.60.40.10:FF:001171">
    <property type="entry name" value="PKHD1, fibrocystin/polyductin"/>
    <property type="match status" value="1"/>
</dbReference>
<dbReference type="FunFam" id="2.60.40.10:FF:001444">
    <property type="entry name" value="PKHD1, fibrocystin/polyductin"/>
    <property type="match status" value="1"/>
</dbReference>
<dbReference type="FunFam" id="2.60.40.10:FF:002082">
    <property type="entry name" value="PKHD1, fibrocystin/polyductin"/>
    <property type="match status" value="1"/>
</dbReference>
<dbReference type="Gene3D" id="2.60.40.10">
    <property type="entry name" value="Immunoglobulins"/>
    <property type="match status" value="5"/>
</dbReference>
<dbReference type="Gene3D" id="2.160.20.10">
    <property type="entry name" value="Single-stranded right-handed beta-helix, Pectin lyase-like"/>
    <property type="match status" value="1"/>
</dbReference>
<dbReference type="InterPro" id="IPR055401">
    <property type="entry name" value="CEMIP_beta-hel_dom"/>
</dbReference>
<dbReference type="InterPro" id="IPR052387">
    <property type="entry name" value="Fibrocystin"/>
</dbReference>
<dbReference type="InterPro" id="IPR019316">
    <property type="entry name" value="G8_domain"/>
</dbReference>
<dbReference type="InterPro" id="IPR013783">
    <property type="entry name" value="Ig-like_fold"/>
</dbReference>
<dbReference type="InterPro" id="IPR014756">
    <property type="entry name" value="Ig_E-set"/>
</dbReference>
<dbReference type="InterPro" id="IPR002909">
    <property type="entry name" value="IPT_dom"/>
</dbReference>
<dbReference type="InterPro" id="IPR037524">
    <property type="entry name" value="PA14/GLEYA"/>
</dbReference>
<dbReference type="InterPro" id="IPR006626">
    <property type="entry name" value="PbH1"/>
</dbReference>
<dbReference type="InterPro" id="IPR012334">
    <property type="entry name" value="Pectin_lyas_fold"/>
</dbReference>
<dbReference type="InterPro" id="IPR011050">
    <property type="entry name" value="Pectin_lyase_fold/virulence"/>
</dbReference>
<dbReference type="PANTHER" id="PTHR46769:SF1">
    <property type="entry name" value="FIBROCYSTIN"/>
    <property type="match status" value="1"/>
</dbReference>
<dbReference type="PANTHER" id="PTHR46769">
    <property type="entry name" value="POLYCYSTIC KIDNEY AND HEPATIC DISEASE 1 (AUTOSOMAL RECESSIVE)-LIKE 1"/>
    <property type="match status" value="1"/>
</dbReference>
<dbReference type="Pfam" id="PF24606">
    <property type="entry name" value="CEMIP_beta-hel"/>
    <property type="match status" value="1"/>
</dbReference>
<dbReference type="Pfam" id="PF10162">
    <property type="entry name" value="G8"/>
    <property type="match status" value="2"/>
</dbReference>
<dbReference type="Pfam" id="PF01833">
    <property type="entry name" value="TIG"/>
    <property type="match status" value="7"/>
</dbReference>
<dbReference type="SMART" id="SM01225">
    <property type="entry name" value="G8"/>
    <property type="match status" value="2"/>
</dbReference>
<dbReference type="SMART" id="SM00429">
    <property type="entry name" value="IPT"/>
    <property type="match status" value="6"/>
</dbReference>
<dbReference type="SMART" id="SM00710">
    <property type="entry name" value="PbH1"/>
    <property type="match status" value="8"/>
</dbReference>
<dbReference type="SUPFAM" id="SSF56988">
    <property type="entry name" value="Anthrax protective antigen"/>
    <property type="match status" value="1"/>
</dbReference>
<dbReference type="SUPFAM" id="SSF81296">
    <property type="entry name" value="E set domains"/>
    <property type="match status" value="6"/>
</dbReference>
<dbReference type="SUPFAM" id="SSF51126">
    <property type="entry name" value="Pectin lyase-like"/>
    <property type="match status" value="2"/>
</dbReference>
<dbReference type="PROSITE" id="PS51484">
    <property type="entry name" value="G8"/>
    <property type="match status" value="2"/>
</dbReference>
<dbReference type="PROSITE" id="PS51820">
    <property type="entry name" value="PA14"/>
    <property type="match status" value="1"/>
</dbReference>